<keyword id="KW-0002">3D-structure</keyword>
<keyword id="KW-0131">Cell cycle</keyword>
<keyword id="KW-0132">Cell division</keyword>
<keyword id="KW-0133">Cell shape</keyword>
<keyword id="KW-0961">Cell wall biogenesis/degradation</keyword>
<keyword id="KW-0963">Cytoplasm</keyword>
<keyword id="KW-0274">FAD</keyword>
<keyword id="KW-0285">Flavoprotein</keyword>
<keyword id="KW-0521">NADP</keyword>
<keyword id="KW-0560">Oxidoreductase</keyword>
<keyword id="KW-0573">Peptidoglycan synthesis</keyword>
<keyword id="KW-1185">Reference proteome</keyword>
<gene>
    <name evidence="1" type="primary">murB</name>
    <name type="ordered locus">lmo1420</name>
</gene>
<dbReference type="EC" id="1.3.1.98" evidence="1"/>
<dbReference type="EMBL" id="AL591979">
    <property type="protein sequence ID" value="CAC99498.1"/>
    <property type="molecule type" value="Genomic_DNA"/>
</dbReference>
<dbReference type="PIR" id="AD1252">
    <property type="entry name" value="AD1252"/>
</dbReference>
<dbReference type="RefSeq" id="NP_464945.1">
    <property type="nucleotide sequence ID" value="NC_003210.1"/>
</dbReference>
<dbReference type="RefSeq" id="WP_010990117.1">
    <property type="nucleotide sequence ID" value="NZ_CP149495.1"/>
</dbReference>
<dbReference type="PDB" id="3TX1">
    <property type="method" value="X-ray"/>
    <property type="resolution" value="2.69 A"/>
    <property type="chains" value="A=1-298"/>
</dbReference>
<dbReference type="PDBsum" id="3TX1"/>
<dbReference type="SMR" id="Q8Y776"/>
<dbReference type="STRING" id="169963.gene:17594077"/>
<dbReference type="PaxDb" id="169963-lmo1420"/>
<dbReference type="EnsemblBacteria" id="CAC99498">
    <property type="protein sequence ID" value="CAC99498"/>
    <property type="gene ID" value="CAC99498"/>
</dbReference>
<dbReference type="GeneID" id="984666"/>
<dbReference type="KEGG" id="lmo:lmo1420"/>
<dbReference type="PATRIC" id="fig|169963.11.peg.1459"/>
<dbReference type="eggNOG" id="COG0812">
    <property type="taxonomic scope" value="Bacteria"/>
</dbReference>
<dbReference type="HOGENOM" id="CLU_035304_1_1_9"/>
<dbReference type="OrthoDB" id="9804753at2"/>
<dbReference type="PhylomeDB" id="Q8Y776"/>
<dbReference type="BioCyc" id="LMON169963:LMO1420-MONOMER"/>
<dbReference type="UniPathway" id="UPA00219"/>
<dbReference type="EvolutionaryTrace" id="Q8Y776"/>
<dbReference type="Proteomes" id="UP000000817">
    <property type="component" value="Chromosome"/>
</dbReference>
<dbReference type="GO" id="GO:0005829">
    <property type="term" value="C:cytosol"/>
    <property type="evidence" value="ECO:0000318"/>
    <property type="project" value="GO_Central"/>
</dbReference>
<dbReference type="GO" id="GO:0071949">
    <property type="term" value="F:FAD binding"/>
    <property type="evidence" value="ECO:0007669"/>
    <property type="project" value="InterPro"/>
</dbReference>
<dbReference type="GO" id="GO:0050660">
    <property type="term" value="F:flavin adenine dinucleotide binding"/>
    <property type="evidence" value="ECO:0000318"/>
    <property type="project" value="GO_Central"/>
</dbReference>
<dbReference type="GO" id="GO:0008762">
    <property type="term" value="F:UDP-N-acetylmuramate dehydrogenase activity"/>
    <property type="evidence" value="ECO:0000318"/>
    <property type="project" value="GO_Central"/>
</dbReference>
<dbReference type="GO" id="GO:0051301">
    <property type="term" value="P:cell division"/>
    <property type="evidence" value="ECO:0007669"/>
    <property type="project" value="UniProtKB-KW"/>
</dbReference>
<dbReference type="GO" id="GO:0071555">
    <property type="term" value="P:cell wall organization"/>
    <property type="evidence" value="ECO:0000318"/>
    <property type="project" value="GO_Central"/>
</dbReference>
<dbReference type="GO" id="GO:0009252">
    <property type="term" value="P:peptidoglycan biosynthetic process"/>
    <property type="evidence" value="ECO:0007669"/>
    <property type="project" value="UniProtKB-UniRule"/>
</dbReference>
<dbReference type="GO" id="GO:0008360">
    <property type="term" value="P:regulation of cell shape"/>
    <property type="evidence" value="ECO:0007669"/>
    <property type="project" value="UniProtKB-KW"/>
</dbReference>
<dbReference type="FunFam" id="3.90.78.10:FF:000001">
    <property type="entry name" value="UDP-N-acetylenolpyruvoylglucosamine reductase"/>
    <property type="match status" value="1"/>
</dbReference>
<dbReference type="Gene3D" id="3.30.465.10">
    <property type="match status" value="1"/>
</dbReference>
<dbReference type="Gene3D" id="3.90.78.10">
    <property type="entry name" value="UDP-N-acetylenolpyruvoylglucosamine reductase, C-terminal domain"/>
    <property type="match status" value="1"/>
</dbReference>
<dbReference type="Gene3D" id="3.30.43.10">
    <property type="entry name" value="Uridine Diphospho-n-acetylenolpyruvylglucosamine Reductase, domain 2"/>
    <property type="match status" value="1"/>
</dbReference>
<dbReference type="HAMAP" id="MF_00037">
    <property type="entry name" value="MurB"/>
    <property type="match status" value="1"/>
</dbReference>
<dbReference type="InterPro" id="IPR016166">
    <property type="entry name" value="FAD-bd_PCMH"/>
</dbReference>
<dbReference type="InterPro" id="IPR036318">
    <property type="entry name" value="FAD-bd_PCMH-like_sf"/>
</dbReference>
<dbReference type="InterPro" id="IPR016167">
    <property type="entry name" value="FAD-bd_PCMH_sub1"/>
</dbReference>
<dbReference type="InterPro" id="IPR016169">
    <property type="entry name" value="FAD-bd_PCMH_sub2"/>
</dbReference>
<dbReference type="InterPro" id="IPR003170">
    <property type="entry name" value="MurB"/>
</dbReference>
<dbReference type="InterPro" id="IPR011601">
    <property type="entry name" value="MurB_C"/>
</dbReference>
<dbReference type="InterPro" id="IPR036635">
    <property type="entry name" value="MurB_C_sf"/>
</dbReference>
<dbReference type="InterPro" id="IPR006094">
    <property type="entry name" value="Oxid_FAD_bind_N"/>
</dbReference>
<dbReference type="NCBIfam" id="TIGR00179">
    <property type="entry name" value="murB"/>
    <property type="match status" value="1"/>
</dbReference>
<dbReference type="NCBIfam" id="NF010480">
    <property type="entry name" value="PRK13905.1"/>
    <property type="match status" value="1"/>
</dbReference>
<dbReference type="PANTHER" id="PTHR21071">
    <property type="entry name" value="UDP-N-ACETYLENOLPYRUVOYLGLUCOSAMINE REDUCTASE"/>
    <property type="match status" value="1"/>
</dbReference>
<dbReference type="PANTHER" id="PTHR21071:SF4">
    <property type="entry name" value="UDP-N-ACETYLENOLPYRUVOYLGLUCOSAMINE REDUCTASE"/>
    <property type="match status" value="1"/>
</dbReference>
<dbReference type="Pfam" id="PF01565">
    <property type="entry name" value="FAD_binding_4"/>
    <property type="match status" value="1"/>
</dbReference>
<dbReference type="Pfam" id="PF02873">
    <property type="entry name" value="MurB_C"/>
    <property type="match status" value="1"/>
</dbReference>
<dbReference type="SUPFAM" id="SSF56176">
    <property type="entry name" value="FAD-binding/transporter-associated domain-like"/>
    <property type="match status" value="1"/>
</dbReference>
<dbReference type="SUPFAM" id="SSF56194">
    <property type="entry name" value="Uridine diphospho-N-Acetylenolpyruvylglucosamine reductase, MurB, C-terminal domain"/>
    <property type="match status" value="1"/>
</dbReference>
<dbReference type="PROSITE" id="PS51387">
    <property type="entry name" value="FAD_PCMH"/>
    <property type="match status" value="1"/>
</dbReference>
<proteinExistence type="evidence at protein level"/>
<accession>Q8Y776</accession>
<name>MURB_LISMO</name>
<organism>
    <name type="scientific">Listeria monocytogenes serovar 1/2a (strain ATCC BAA-679 / EGD-e)</name>
    <dbReference type="NCBI Taxonomy" id="169963"/>
    <lineage>
        <taxon>Bacteria</taxon>
        <taxon>Bacillati</taxon>
        <taxon>Bacillota</taxon>
        <taxon>Bacilli</taxon>
        <taxon>Bacillales</taxon>
        <taxon>Listeriaceae</taxon>
        <taxon>Listeria</taxon>
    </lineage>
</organism>
<reference key="1">
    <citation type="journal article" date="2001" name="Science">
        <title>Comparative genomics of Listeria species.</title>
        <authorList>
            <person name="Glaser P."/>
            <person name="Frangeul L."/>
            <person name="Buchrieser C."/>
            <person name="Rusniok C."/>
            <person name="Amend A."/>
            <person name="Baquero F."/>
            <person name="Berche P."/>
            <person name="Bloecker H."/>
            <person name="Brandt P."/>
            <person name="Chakraborty T."/>
            <person name="Charbit A."/>
            <person name="Chetouani F."/>
            <person name="Couve E."/>
            <person name="de Daruvar A."/>
            <person name="Dehoux P."/>
            <person name="Domann E."/>
            <person name="Dominguez-Bernal G."/>
            <person name="Duchaud E."/>
            <person name="Durant L."/>
            <person name="Dussurget O."/>
            <person name="Entian K.-D."/>
            <person name="Fsihi H."/>
            <person name="Garcia-del Portillo F."/>
            <person name="Garrido P."/>
            <person name="Gautier L."/>
            <person name="Goebel W."/>
            <person name="Gomez-Lopez N."/>
            <person name="Hain T."/>
            <person name="Hauf J."/>
            <person name="Jackson D."/>
            <person name="Jones L.-M."/>
            <person name="Kaerst U."/>
            <person name="Kreft J."/>
            <person name="Kuhn M."/>
            <person name="Kunst F."/>
            <person name="Kurapkat G."/>
            <person name="Madueno E."/>
            <person name="Maitournam A."/>
            <person name="Mata Vicente J."/>
            <person name="Ng E."/>
            <person name="Nedjari H."/>
            <person name="Nordsiek G."/>
            <person name="Novella S."/>
            <person name="de Pablos B."/>
            <person name="Perez-Diaz J.-C."/>
            <person name="Purcell R."/>
            <person name="Remmel B."/>
            <person name="Rose M."/>
            <person name="Schlueter T."/>
            <person name="Simoes N."/>
            <person name="Tierrez A."/>
            <person name="Vazquez-Boland J.-A."/>
            <person name="Voss H."/>
            <person name="Wehland J."/>
            <person name="Cossart P."/>
        </authorList>
    </citation>
    <scope>NUCLEOTIDE SEQUENCE [LARGE SCALE GENOMIC DNA]</scope>
    <source>
        <strain>ATCC BAA-679 / EGD-e</strain>
    </source>
</reference>
<comment type="function">
    <text evidence="1">Cell wall formation.</text>
</comment>
<comment type="catalytic activity">
    <reaction evidence="1">
        <text>UDP-N-acetyl-alpha-D-muramate + NADP(+) = UDP-N-acetyl-3-O-(1-carboxyvinyl)-alpha-D-glucosamine + NADPH + H(+)</text>
        <dbReference type="Rhea" id="RHEA:12248"/>
        <dbReference type="ChEBI" id="CHEBI:15378"/>
        <dbReference type="ChEBI" id="CHEBI:57783"/>
        <dbReference type="ChEBI" id="CHEBI:58349"/>
        <dbReference type="ChEBI" id="CHEBI:68483"/>
        <dbReference type="ChEBI" id="CHEBI:70757"/>
        <dbReference type="EC" id="1.3.1.98"/>
    </reaction>
</comment>
<comment type="cofactor">
    <cofactor evidence="1">
        <name>FAD</name>
        <dbReference type="ChEBI" id="CHEBI:57692"/>
    </cofactor>
</comment>
<comment type="pathway">
    <text evidence="1">Cell wall biogenesis; peptidoglycan biosynthesis.</text>
</comment>
<comment type="subcellular location">
    <subcellularLocation>
        <location evidence="1">Cytoplasm</location>
    </subcellularLocation>
</comment>
<comment type="similarity">
    <text evidence="1">Belongs to the MurB family.</text>
</comment>
<protein>
    <recommendedName>
        <fullName evidence="1">UDP-N-acetylenolpyruvoylglucosamine reductase</fullName>
        <ecNumber evidence="1">1.3.1.98</ecNumber>
    </recommendedName>
    <alternativeName>
        <fullName evidence="1">UDP-N-acetylmuramate dehydrogenase</fullName>
    </alternativeName>
</protein>
<feature type="chain" id="PRO_0000179227" description="UDP-N-acetylenolpyruvoylglucosamine reductase">
    <location>
        <begin position="1"/>
        <end position="298"/>
    </location>
</feature>
<feature type="domain" description="FAD-binding PCMH-type" evidence="1">
    <location>
        <begin position="26"/>
        <end position="191"/>
    </location>
</feature>
<feature type="active site" evidence="1">
    <location>
        <position position="170"/>
    </location>
</feature>
<feature type="active site" description="Proton donor" evidence="1">
    <location>
        <position position="220"/>
    </location>
</feature>
<feature type="active site" evidence="1">
    <location>
        <position position="290"/>
    </location>
</feature>
<feature type="helix" evidence="2">
    <location>
        <begin position="4"/>
        <end position="7"/>
    </location>
</feature>
<feature type="strand" evidence="2">
    <location>
        <begin position="11"/>
        <end position="18"/>
    </location>
</feature>
<feature type="helix" evidence="2">
    <location>
        <begin position="19"/>
        <end position="22"/>
    </location>
</feature>
<feature type="strand" evidence="2">
    <location>
        <begin position="30"/>
        <end position="36"/>
    </location>
</feature>
<feature type="helix" evidence="2">
    <location>
        <begin position="40"/>
        <end position="52"/>
    </location>
</feature>
<feature type="strand" evidence="2">
    <location>
        <begin position="57"/>
        <end position="61"/>
    </location>
</feature>
<feature type="strand" evidence="2">
    <location>
        <begin position="66"/>
        <end position="68"/>
    </location>
</feature>
<feature type="strand" evidence="2">
    <location>
        <begin position="73"/>
        <end position="79"/>
    </location>
</feature>
<feature type="strand" evidence="2">
    <location>
        <begin position="86"/>
        <end position="89"/>
    </location>
</feature>
<feature type="strand" evidence="2">
    <location>
        <begin position="92"/>
        <end position="96"/>
    </location>
</feature>
<feature type="helix" evidence="2">
    <location>
        <begin position="101"/>
        <end position="110"/>
    </location>
</feature>
<feature type="strand" evidence="2">
    <location>
        <begin position="113"/>
        <end position="115"/>
    </location>
</feature>
<feature type="helix" evidence="2">
    <location>
        <begin position="117"/>
        <end position="119"/>
    </location>
</feature>
<feature type="helix" evidence="2">
    <location>
        <begin position="126"/>
        <end position="132"/>
    </location>
</feature>
<feature type="helix" evidence="2">
    <location>
        <begin position="141"/>
        <end position="144"/>
    </location>
</feature>
<feature type="strand" evidence="2">
    <location>
        <begin position="145"/>
        <end position="151"/>
    </location>
</feature>
<feature type="strand" evidence="2">
    <location>
        <begin position="157"/>
        <end position="161"/>
    </location>
</feature>
<feature type="helix" evidence="2">
    <location>
        <begin position="162"/>
        <end position="164"/>
    </location>
</feature>
<feature type="turn" evidence="2">
    <location>
        <begin position="173"/>
        <end position="175"/>
    </location>
</feature>
<feature type="helix" evidence="2">
    <location>
        <begin position="176"/>
        <end position="178"/>
    </location>
</feature>
<feature type="strand" evidence="2">
    <location>
        <begin position="180"/>
        <end position="187"/>
    </location>
</feature>
<feature type="helix" evidence="2">
    <location>
        <begin position="193"/>
        <end position="210"/>
    </location>
</feature>
<feature type="helix" evidence="2">
    <location>
        <begin position="230"/>
        <end position="236"/>
    </location>
</feature>
<feature type="strand" evidence="2">
    <location>
        <begin position="247"/>
        <end position="249"/>
    </location>
</feature>
<feature type="strand" evidence="2">
    <location>
        <begin position="257"/>
        <end position="259"/>
    </location>
</feature>
<feature type="helix" evidence="2">
    <location>
        <begin position="265"/>
        <end position="283"/>
    </location>
</feature>
<feature type="strand" evidence="2">
    <location>
        <begin position="289"/>
        <end position="295"/>
    </location>
</feature>
<sequence>MNNLQTKFPHIAIKLNEPLSKYTYTKTGGAADVFVMPKTIEEAQEVVAYCHQNKIPLTILGNGSNLIIKDGGIRGVILHLDLLQTIERNNTQIVAMSGAKLIDTAKFALNESLSGLEFACGIPGSIGGALHMNAGAYGGEISDVLEAATVLTQTGELKKLKRSELKAAYRFSTIAEKNYIVLDATFSLALEEKNLIQAKMDELTAAREAKQPLEYPSCGSVFKRPPGHFAGKLIQDSGLQGHIIGGAQVSLKHAGFIVNIGGATATDYMNLIAYVQQTVREKFDVELETEVKIIGEDK</sequence>
<evidence type="ECO:0000255" key="1">
    <source>
        <dbReference type="HAMAP-Rule" id="MF_00037"/>
    </source>
</evidence>
<evidence type="ECO:0007829" key="2">
    <source>
        <dbReference type="PDB" id="3TX1"/>
    </source>
</evidence>